<feature type="chain" id="PRO_0000314158" description="Probable RNA-binding protein EIF1AD">
    <location>
        <begin position="1"/>
        <end position="169"/>
    </location>
</feature>
<feature type="domain" description="S1-like" evidence="2">
    <location>
        <begin position="14"/>
        <end position="89"/>
    </location>
</feature>
<feature type="region of interest" description="Disordered" evidence="3">
    <location>
        <begin position="115"/>
        <end position="169"/>
    </location>
</feature>
<feature type="compositionally biased region" description="Acidic residues" evidence="3">
    <location>
        <begin position="156"/>
        <end position="169"/>
    </location>
</feature>
<gene>
    <name type="primary">eif1ad</name>
</gene>
<protein>
    <recommendedName>
        <fullName>Probable RNA-binding protein EIF1AD</fullName>
    </recommendedName>
    <alternativeName>
        <fullName>Eukaryotic translation initiation factor 1A domain-containing protein</fullName>
    </alternativeName>
</protein>
<evidence type="ECO:0000250" key="1"/>
<evidence type="ECO:0000255" key="2">
    <source>
        <dbReference type="PROSITE-ProRule" id="PRU00181"/>
    </source>
</evidence>
<evidence type="ECO:0000256" key="3">
    <source>
        <dbReference type="SAM" id="MobiDB-lite"/>
    </source>
</evidence>
<evidence type="ECO:0000305" key="4"/>
<dbReference type="EMBL" id="BC088961">
    <property type="protein sequence ID" value="AAH88961.1"/>
    <property type="molecule type" value="mRNA"/>
</dbReference>
<dbReference type="RefSeq" id="NP_001088978.1">
    <property type="nucleotide sequence ID" value="NM_001095509.1"/>
</dbReference>
<dbReference type="SMR" id="Q5HZM1"/>
<dbReference type="DNASU" id="496359"/>
<dbReference type="GeneID" id="496359"/>
<dbReference type="KEGG" id="xla:496359"/>
<dbReference type="AGR" id="Xenbase:XB-GENE-6252080"/>
<dbReference type="CTD" id="496359"/>
<dbReference type="Xenbase" id="XB-GENE-6252080">
    <property type="gene designation" value="eif1ad.L"/>
</dbReference>
<dbReference type="OMA" id="FRKNIWV"/>
<dbReference type="OrthoDB" id="1738325at2759"/>
<dbReference type="Proteomes" id="UP000186698">
    <property type="component" value="Chromosome 4L"/>
</dbReference>
<dbReference type="Bgee" id="496359">
    <property type="expression patterns" value="Expressed in gastrula and 19 other cell types or tissues"/>
</dbReference>
<dbReference type="GO" id="GO:0005634">
    <property type="term" value="C:nucleus"/>
    <property type="evidence" value="ECO:0000318"/>
    <property type="project" value="GO_Central"/>
</dbReference>
<dbReference type="GO" id="GO:0003723">
    <property type="term" value="F:RNA binding"/>
    <property type="evidence" value="ECO:0007669"/>
    <property type="project" value="UniProtKB-KW"/>
</dbReference>
<dbReference type="GO" id="GO:0003743">
    <property type="term" value="F:translation initiation factor activity"/>
    <property type="evidence" value="ECO:0007669"/>
    <property type="project" value="InterPro"/>
</dbReference>
<dbReference type="CDD" id="cd05792">
    <property type="entry name" value="S1_eIF1AD_like"/>
    <property type="match status" value="1"/>
</dbReference>
<dbReference type="Gene3D" id="1.10.1200.180">
    <property type="match status" value="1"/>
</dbReference>
<dbReference type="Gene3D" id="2.40.50.140">
    <property type="entry name" value="Nucleic acid-binding proteins"/>
    <property type="match status" value="1"/>
</dbReference>
<dbReference type="InterPro" id="IPR039294">
    <property type="entry name" value="EIF1AD"/>
</dbReference>
<dbReference type="InterPro" id="IPR012340">
    <property type="entry name" value="NA-bd_OB-fold"/>
</dbReference>
<dbReference type="InterPro" id="IPR006196">
    <property type="entry name" value="RNA-binding_domain_S1_IF1"/>
</dbReference>
<dbReference type="InterPro" id="IPR001253">
    <property type="entry name" value="TIF_eIF-1A"/>
</dbReference>
<dbReference type="PANTHER" id="PTHR21641:SF0">
    <property type="entry name" value="RNA-BINDING PROTEIN EIF1AD-RELATED"/>
    <property type="match status" value="1"/>
</dbReference>
<dbReference type="PANTHER" id="PTHR21641">
    <property type="entry name" value="TRANSLATION INITIATION FACTOR-RELATED"/>
    <property type="match status" value="1"/>
</dbReference>
<dbReference type="Pfam" id="PF01176">
    <property type="entry name" value="eIF-1a"/>
    <property type="match status" value="1"/>
</dbReference>
<dbReference type="SMART" id="SM00652">
    <property type="entry name" value="eIF1a"/>
    <property type="match status" value="1"/>
</dbReference>
<dbReference type="SUPFAM" id="SSF50249">
    <property type="entry name" value="Nucleic acid-binding proteins"/>
    <property type="match status" value="1"/>
</dbReference>
<dbReference type="PROSITE" id="PS50832">
    <property type="entry name" value="S1_IF1_TYPE"/>
    <property type="match status" value="1"/>
</dbReference>
<comment type="function">
    <text evidence="1">May play a role into cellular response to oxidative stress. May decrease cell proliferation (By similarity).</text>
</comment>
<comment type="subcellular location">
    <subcellularLocation>
        <location evidence="1">Nucleus</location>
    </subcellularLocation>
</comment>
<comment type="similarity">
    <text evidence="4">Belongs to the EIF1AD family.</text>
</comment>
<proteinExistence type="evidence at transcript level"/>
<organism>
    <name type="scientific">Xenopus laevis</name>
    <name type="common">African clawed frog</name>
    <dbReference type="NCBI Taxonomy" id="8355"/>
    <lineage>
        <taxon>Eukaryota</taxon>
        <taxon>Metazoa</taxon>
        <taxon>Chordata</taxon>
        <taxon>Craniata</taxon>
        <taxon>Vertebrata</taxon>
        <taxon>Euteleostomi</taxon>
        <taxon>Amphibia</taxon>
        <taxon>Batrachia</taxon>
        <taxon>Anura</taxon>
        <taxon>Pipoidea</taxon>
        <taxon>Pipidae</taxon>
        <taxon>Xenopodinae</taxon>
        <taxon>Xenopus</taxon>
        <taxon>Xenopus</taxon>
    </lineage>
</organism>
<name>EIF1A_XENLA</name>
<keyword id="KW-0539">Nucleus</keyword>
<keyword id="KW-1185">Reference proteome</keyword>
<keyword id="KW-0694">RNA-binding</keyword>
<reference key="1">
    <citation type="submission" date="2005-01" db="EMBL/GenBank/DDBJ databases">
        <authorList>
            <consortium name="NIH - Xenopus Gene Collection (XGC) project"/>
        </authorList>
    </citation>
    <scope>NUCLEOTIDE SEQUENCE [LARGE SCALE MRNA]</scope>
    <source>
        <tissue>Egg</tissue>
    </source>
</reference>
<accession>Q5HZM1</accession>
<sequence>MSKATKRKHVVKEVLGDYVQPTEHQSIVKVLGSPGNNLHEVETAEGERFLASMPTKFRKNIWIKRGDFLIVDPIVEGEKVKAEIAFILYKDHQRLLQKEGLWPEGFTQDKTGLVAKEKESSGIQSTEAQAKPQGEDSETDDDSGLFVNTNHVHYEDSEEESESEEDEEN</sequence>